<evidence type="ECO:0000255" key="1">
    <source>
        <dbReference type="HAMAP-Rule" id="MF_03122"/>
    </source>
</evidence>
<evidence type="ECO:0000256" key="2">
    <source>
        <dbReference type="SAM" id="MobiDB-lite"/>
    </source>
</evidence>
<evidence type="ECO:0000305" key="3"/>
<name>RS3A_CATRO</name>
<keyword id="KW-0963">Cytoplasm</keyword>
<keyword id="KW-0687">Ribonucleoprotein</keyword>
<keyword id="KW-0689">Ribosomal protein</keyword>
<comment type="subunit">
    <text evidence="1">Component of the small ribosomal subunit. Mature ribosomes consist of a small (40S) and a large (60S) subunit. The 40S subunit contains about 33 different proteins and 1 molecule of RNA (18S). The 60S subunit contains about 49 different proteins and 3 molecules of RNA (25S, 5.8S and 5S).</text>
</comment>
<comment type="subcellular location">
    <subcellularLocation>
        <location>Cytoplasm</location>
    </subcellularLocation>
</comment>
<comment type="developmental stage">
    <text>Expressed specifically in the S phase during the plant cell cycle.</text>
</comment>
<comment type="similarity">
    <text evidence="1">Belongs to the eukaryotic ribosomal protein eS1 family.</text>
</comment>
<comment type="sequence caution" evidence="3">
    <conflict type="frameshift">
        <sequence resource="EMBL-CDS" id="BAA00860"/>
    </conflict>
</comment>
<comment type="sequence caution" evidence="3">
    <conflict type="frameshift">
        <sequence resource="EMBL-CDS" id="BAA05057"/>
    </conflict>
</comment>
<dbReference type="EMBL" id="D01058">
    <property type="protein sequence ID" value="BAA00860.1"/>
    <property type="status" value="ALT_FRAME"/>
    <property type="molecule type" value="mRNA"/>
</dbReference>
<dbReference type="EMBL" id="D26058">
    <property type="protein sequence ID" value="BAA05057.1"/>
    <property type="status" value="ALT_FRAME"/>
    <property type="molecule type" value="Genomic_DNA"/>
</dbReference>
<dbReference type="PIR" id="S46496">
    <property type="entry name" value="JQ0939"/>
</dbReference>
<dbReference type="SMR" id="P33444"/>
<dbReference type="GO" id="GO:0022627">
    <property type="term" value="C:cytosolic small ribosomal subunit"/>
    <property type="evidence" value="ECO:0007669"/>
    <property type="project" value="UniProtKB-UniRule"/>
</dbReference>
<dbReference type="GO" id="GO:0003735">
    <property type="term" value="F:structural constituent of ribosome"/>
    <property type="evidence" value="ECO:0007669"/>
    <property type="project" value="UniProtKB-UniRule"/>
</dbReference>
<dbReference type="GO" id="GO:0006412">
    <property type="term" value="P:translation"/>
    <property type="evidence" value="ECO:0007669"/>
    <property type="project" value="UniProtKB-UniRule"/>
</dbReference>
<dbReference type="HAMAP" id="MF_03122">
    <property type="entry name" value="Ribosomal_eS1_euk"/>
    <property type="match status" value="1"/>
</dbReference>
<dbReference type="InterPro" id="IPR001593">
    <property type="entry name" value="Ribosomal_eS1"/>
</dbReference>
<dbReference type="InterPro" id="IPR018281">
    <property type="entry name" value="Ribosomal_eS1_CS"/>
</dbReference>
<dbReference type="InterPro" id="IPR027500">
    <property type="entry name" value="Ribosomal_eS1_euk"/>
</dbReference>
<dbReference type="PANTHER" id="PTHR11830">
    <property type="entry name" value="40S RIBOSOMAL PROTEIN S3A"/>
    <property type="match status" value="1"/>
</dbReference>
<dbReference type="Pfam" id="PF01015">
    <property type="entry name" value="Ribosomal_S3Ae"/>
    <property type="match status" value="1"/>
</dbReference>
<dbReference type="SMART" id="SM01397">
    <property type="entry name" value="Ribosomal_S3Ae"/>
    <property type="match status" value="1"/>
</dbReference>
<dbReference type="PROSITE" id="PS01191">
    <property type="entry name" value="RIBOSOMAL_S3AE"/>
    <property type="match status" value="1"/>
</dbReference>
<reference key="1">
    <citation type="journal article" date="1991" name="Plant J.">
        <title>Identification of a novel S-phase-specific gene during the cell cycle in synchronous cultures of Catharanthus roseus cells.</title>
        <authorList>
            <person name="Ito M."/>
            <person name="Kodama H."/>
            <person name="Komamine A."/>
        </authorList>
    </citation>
    <scope>NUCLEOTIDE SEQUENCE [MRNA]</scope>
</reference>
<reference key="2">
    <citation type="journal article" date="1994" name="Plant Mol. Biol.">
        <title>Meristem-specific gene expression directed by the promoter of the S-phase-specific gene, cyc07, in transgenic Arabidopsis.</title>
        <authorList>
            <person name="Ito M."/>
            <person name="Sato T."/>
            <person name="Fukuda H."/>
            <person name="Komamine A."/>
        </authorList>
    </citation>
    <scope>NUCLEOTIDE SEQUENCE [GENOMIC DNA]</scope>
    <source>
        <strain>B</strain>
    </source>
</reference>
<organism>
    <name type="scientific">Catharanthus roseus</name>
    <name type="common">Madagascar periwinkle</name>
    <name type="synonym">Vinca rosea</name>
    <dbReference type="NCBI Taxonomy" id="4058"/>
    <lineage>
        <taxon>Eukaryota</taxon>
        <taxon>Viridiplantae</taxon>
        <taxon>Streptophyta</taxon>
        <taxon>Embryophyta</taxon>
        <taxon>Tracheophyta</taxon>
        <taxon>Spermatophyta</taxon>
        <taxon>Magnoliopsida</taxon>
        <taxon>eudicotyledons</taxon>
        <taxon>Gunneridae</taxon>
        <taxon>Pentapetalae</taxon>
        <taxon>asterids</taxon>
        <taxon>lamiids</taxon>
        <taxon>Gentianales</taxon>
        <taxon>Apocynaceae</taxon>
        <taxon>Rauvolfioideae</taxon>
        <taxon>Vinceae</taxon>
        <taxon>Catharanthinae</taxon>
        <taxon>Catharanthus</taxon>
    </lineage>
</organism>
<sequence>MAVGKNKRISKGKKGGKKKAADPFAKKDWYDIKAPSVFSVRNVGKTLVTRTQGTKIASEGLEHRVFEISLADLQGDEDHSFRKIRLRAEDIQGKNVLTNFWGMDFTTDKLRSLVRKWQSLIEAHVDVKTTDSYTLRMFCIGFTKKRANQQKRTCYAQSSQIRQIRRKMREIMVNQAQSCDLKDLVQKFIPESIGREIEKATSSIYPLQNVFIRKVKILKAPKFDLGKLMEVHGDYNEDDIGTKLDRPAEEAVAEPTEVIGA</sequence>
<feature type="initiator methionine" description="Removed" evidence="1">
    <location>
        <position position="1"/>
    </location>
</feature>
<feature type="chain" id="PRO_0000153534" description="Small ribosomal subunit protein eS1">
    <location>
        <begin position="2"/>
        <end position="261"/>
    </location>
</feature>
<feature type="region of interest" description="Disordered" evidence="2">
    <location>
        <begin position="1"/>
        <end position="20"/>
    </location>
</feature>
<feature type="compositionally biased region" description="Basic residues" evidence="2">
    <location>
        <begin position="1"/>
        <end position="18"/>
    </location>
</feature>
<feature type="sequence conflict" description="In Ref. 2; BAA05057." evidence="3" ref="2">
    <original>E</original>
    <variation>K</variation>
    <location>
        <position position="62"/>
    </location>
</feature>
<feature type="sequence conflict" description="In Ref. 2; BAA05057." evidence="3" ref="2">
    <original>Q</original>
    <variation>P</variation>
    <location>
        <position position="177"/>
    </location>
</feature>
<feature type="sequence conflict" description="In Ref. 2; BAA05057." evidence="3" ref="2">
    <original>S</original>
    <variation>P</variation>
    <location>
        <position position="202"/>
    </location>
</feature>
<gene>
    <name evidence="1" type="primary">RPS3A</name>
    <name type="synonym">CYC07</name>
</gene>
<accession>P33444</accession>
<accession>P93765</accession>
<proteinExistence type="evidence at transcript level"/>
<protein>
    <recommendedName>
        <fullName evidence="1">Small ribosomal subunit protein eS1</fullName>
    </recommendedName>
    <alternativeName>
        <fullName evidence="3">40S ribosomal protein S3a</fullName>
    </alternativeName>
    <alternativeName>
        <fullName>CYC07 protein</fullName>
    </alternativeName>
</protein>